<gene>
    <name evidence="1" type="primary">luxS1</name>
    <name type="ordered locus">LBUL_0088</name>
</gene>
<dbReference type="EC" id="4.4.1.21" evidence="1"/>
<dbReference type="EMBL" id="CP000412">
    <property type="protein sequence ID" value="ABJ57773.1"/>
    <property type="molecule type" value="Genomic_DNA"/>
</dbReference>
<dbReference type="RefSeq" id="WP_002879583.1">
    <property type="nucleotide sequence ID" value="NC_008529.1"/>
</dbReference>
<dbReference type="SMR" id="Q04CP9"/>
<dbReference type="KEGG" id="lbu:LBUL_0088"/>
<dbReference type="HOGENOM" id="CLU_107531_2_1_9"/>
<dbReference type="BioCyc" id="LDEL321956:LBUL_RS00405-MONOMER"/>
<dbReference type="GO" id="GO:0005506">
    <property type="term" value="F:iron ion binding"/>
    <property type="evidence" value="ECO:0007669"/>
    <property type="project" value="InterPro"/>
</dbReference>
<dbReference type="GO" id="GO:0043768">
    <property type="term" value="F:S-ribosylhomocysteine lyase activity"/>
    <property type="evidence" value="ECO:0007669"/>
    <property type="project" value="UniProtKB-UniRule"/>
</dbReference>
<dbReference type="GO" id="GO:0009372">
    <property type="term" value="P:quorum sensing"/>
    <property type="evidence" value="ECO:0007669"/>
    <property type="project" value="UniProtKB-UniRule"/>
</dbReference>
<dbReference type="Gene3D" id="3.30.1360.80">
    <property type="entry name" value="S-ribosylhomocysteinase (LuxS)"/>
    <property type="match status" value="1"/>
</dbReference>
<dbReference type="HAMAP" id="MF_00091">
    <property type="entry name" value="LuxS"/>
    <property type="match status" value="1"/>
</dbReference>
<dbReference type="InterPro" id="IPR037005">
    <property type="entry name" value="LuxS_sf"/>
</dbReference>
<dbReference type="InterPro" id="IPR011249">
    <property type="entry name" value="Metalloenz_LuxS/M16"/>
</dbReference>
<dbReference type="InterPro" id="IPR003815">
    <property type="entry name" value="S-ribosylhomocysteinase"/>
</dbReference>
<dbReference type="NCBIfam" id="NF002606">
    <property type="entry name" value="PRK02260.2-4"/>
    <property type="match status" value="1"/>
</dbReference>
<dbReference type="NCBIfam" id="NF002608">
    <property type="entry name" value="PRK02260.3-1"/>
    <property type="match status" value="1"/>
</dbReference>
<dbReference type="PANTHER" id="PTHR35799">
    <property type="entry name" value="S-RIBOSYLHOMOCYSTEINE LYASE"/>
    <property type="match status" value="1"/>
</dbReference>
<dbReference type="PANTHER" id="PTHR35799:SF1">
    <property type="entry name" value="S-RIBOSYLHOMOCYSTEINE LYASE"/>
    <property type="match status" value="1"/>
</dbReference>
<dbReference type="Pfam" id="PF02664">
    <property type="entry name" value="LuxS"/>
    <property type="match status" value="1"/>
</dbReference>
<dbReference type="PIRSF" id="PIRSF006160">
    <property type="entry name" value="AI2"/>
    <property type="match status" value="1"/>
</dbReference>
<dbReference type="PRINTS" id="PR01487">
    <property type="entry name" value="LUXSPROTEIN"/>
</dbReference>
<dbReference type="SUPFAM" id="SSF63411">
    <property type="entry name" value="LuxS/MPP-like metallohydrolase"/>
    <property type="match status" value="1"/>
</dbReference>
<reference key="1">
    <citation type="journal article" date="2006" name="Proc. Natl. Acad. Sci. U.S.A.">
        <title>Comparative genomics of the lactic acid bacteria.</title>
        <authorList>
            <person name="Makarova K.S."/>
            <person name="Slesarev A."/>
            <person name="Wolf Y.I."/>
            <person name="Sorokin A."/>
            <person name="Mirkin B."/>
            <person name="Koonin E.V."/>
            <person name="Pavlov A."/>
            <person name="Pavlova N."/>
            <person name="Karamychev V."/>
            <person name="Polouchine N."/>
            <person name="Shakhova V."/>
            <person name="Grigoriev I."/>
            <person name="Lou Y."/>
            <person name="Rohksar D."/>
            <person name="Lucas S."/>
            <person name="Huang K."/>
            <person name="Goodstein D.M."/>
            <person name="Hawkins T."/>
            <person name="Plengvidhya V."/>
            <person name="Welker D."/>
            <person name="Hughes J."/>
            <person name="Goh Y."/>
            <person name="Benson A."/>
            <person name="Baldwin K."/>
            <person name="Lee J.-H."/>
            <person name="Diaz-Muniz I."/>
            <person name="Dosti B."/>
            <person name="Smeianov V."/>
            <person name="Wechter W."/>
            <person name="Barabote R."/>
            <person name="Lorca G."/>
            <person name="Altermann E."/>
            <person name="Barrangou R."/>
            <person name="Ganesan B."/>
            <person name="Xie Y."/>
            <person name="Rawsthorne H."/>
            <person name="Tamir D."/>
            <person name="Parker C."/>
            <person name="Breidt F."/>
            <person name="Broadbent J.R."/>
            <person name="Hutkins R."/>
            <person name="O'Sullivan D."/>
            <person name="Steele J."/>
            <person name="Unlu G."/>
            <person name="Saier M.H. Jr."/>
            <person name="Klaenhammer T."/>
            <person name="Richardson P."/>
            <person name="Kozyavkin S."/>
            <person name="Weimer B.C."/>
            <person name="Mills D.A."/>
        </authorList>
    </citation>
    <scope>NUCLEOTIDE SEQUENCE [LARGE SCALE GENOMIC DNA]</scope>
    <source>
        <strain>ATCC BAA-365 / Lb-18</strain>
    </source>
</reference>
<evidence type="ECO:0000255" key="1">
    <source>
        <dbReference type="HAMAP-Rule" id="MF_00091"/>
    </source>
</evidence>
<proteinExistence type="inferred from homology"/>
<organism>
    <name type="scientific">Lactobacillus delbrueckii subsp. bulgaricus (strain ATCC BAA-365 / Lb-18)</name>
    <dbReference type="NCBI Taxonomy" id="321956"/>
    <lineage>
        <taxon>Bacteria</taxon>
        <taxon>Bacillati</taxon>
        <taxon>Bacillota</taxon>
        <taxon>Bacilli</taxon>
        <taxon>Lactobacillales</taxon>
        <taxon>Lactobacillaceae</taxon>
        <taxon>Lactobacillus</taxon>
    </lineage>
</organism>
<feature type="chain" id="PRO_0000298007" description="S-ribosylhomocysteine lyase 1">
    <location>
        <begin position="1"/>
        <end position="159"/>
    </location>
</feature>
<feature type="binding site" evidence="1">
    <location>
        <position position="54"/>
    </location>
    <ligand>
        <name>Fe cation</name>
        <dbReference type="ChEBI" id="CHEBI:24875"/>
    </ligand>
</feature>
<feature type="binding site" evidence="1">
    <location>
        <position position="58"/>
    </location>
    <ligand>
        <name>Fe cation</name>
        <dbReference type="ChEBI" id="CHEBI:24875"/>
    </ligand>
</feature>
<feature type="binding site" evidence="1">
    <location>
        <position position="124"/>
    </location>
    <ligand>
        <name>Fe cation</name>
        <dbReference type="ChEBI" id="CHEBI:24875"/>
    </ligand>
</feature>
<comment type="function">
    <text evidence="1">Involved in the synthesis of autoinducer 2 (AI-2) which is secreted by bacteria and is used to communicate both the cell density and the metabolic potential of the environment. The regulation of gene expression in response to changes in cell density is called quorum sensing. Catalyzes the transformation of S-ribosylhomocysteine (RHC) to homocysteine (HC) and 4,5-dihydroxy-2,3-pentadione (DPD).</text>
</comment>
<comment type="catalytic activity">
    <reaction evidence="1">
        <text>S-(5-deoxy-D-ribos-5-yl)-L-homocysteine = (S)-4,5-dihydroxypentane-2,3-dione + L-homocysteine</text>
        <dbReference type="Rhea" id="RHEA:17753"/>
        <dbReference type="ChEBI" id="CHEBI:29484"/>
        <dbReference type="ChEBI" id="CHEBI:58195"/>
        <dbReference type="ChEBI" id="CHEBI:58199"/>
        <dbReference type="EC" id="4.4.1.21"/>
    </reaction>
</comment>
<comment type="cofactor">
    <cofactor evidence="1">
        <name>Fe cation</name>
        <dbReference type="ChEBI" id="CHEBI:24875"/>
    </cofactor>
    <text evidence="1">Binds 1 Fe cation per subunit.</text>
</comment>
<comment type="subunit">
    <text evidence="1">Homodimer.</text>
</comment>
<comment type="similarity">
    <text evidence="1">Belongs to the LuxS family.</text>
</comment>
<name>LUXS1_LACDB</name>
<keyword id="KW-0071">Autoinducer synthesis</keyword>
<keyword id="KW-0408">Iron</keyword>
<keyword id="KW-0456">Lyase</keyword>
<keyword id="KW-0479">Metal-binding</keyword>
<keyword id="KW-0673">Quorum sensing</keyword>
<protein>
    <recommendedName>
        <fullName evidence="1">S-ribosylhomocysteine lyase 1</fullName>
        <ecNumber evidence="1">4.4.1.21</ecNumber>
    </recommendedName>
    <alternativeName>
        <fullName evidence="1">AI-2 synthesis protein 1</fullName>
    </alternativeName>
    <alternativeName>
        <fullName evidence="1">Autoinducer-2 production protein LuxS 1</fullName>
    </alternativeName>
</protein>
<sequence>MAKVESFELDHTKVKAPYVRLITVEEGPKGDKISNFDLRLVQPNENAIPTGGLHTIEHLLASLLRDRLDGVIDCSPFGCRTGFHLITWGEHSTTEVAKALRDSLKAIRDDITWEDVPGTTIESCGNYRDHSLFSAQEWCNDILKKGISDDPFDRHVVED</sequence>
<accession>Q04CP9</accession>